<sequence length="156" mass="16937">MSINATLFVQAIVFLILVLFTMKFVWPPITKALDERAQKIADGLAAADRAKTELAAADQRVKQELAAASNEIATRLADAERRAQAIIEEAKARANDEGNKIVAAARAEAEQQAIQAREALREQVAALAVKGAEQILRKEVNAGVHADLLNRLKTEL</sequence>
<keyword id="KW-0066">ATP synthesis</keyword>
<keyword id="KW-0997">Cell inner membrane</keyword>
<keyword id="KW-1003">Cell membrane</keyword>
<keyword id="KW-0138">CF(0)</keyword>
<keyword id="KW-0375">Hydrogen ion transport</keyword>
<keyword id="KW-0406">Ion transport</keyword>
<keyword id="KW-0472">Membrane</keyword>
<keyword id="KW-0812">Transmembrane</keyword>
<keyword id="KW-1133">Transmembrane helix</keyword>
<keyword id="KW-0813">Transport</keyword>
<gene>
    <name evidence="1" type="primary">atpF</name>
    <name type="ordered locus">Ajs_0304</name>
</gene>
<dbReference type="EMBL" id="CP000539">
    <property type="protein sequence ID" value="ABM40558.1"/>
    <property type="molecule type" value="Genomic_DNA"/>
</dbReference>
<dbReference type="SMR" id="A1W2T3"/>
<dbReference type="STRING" id="232721.Ajs_0304"/>
<dbReference type="KEGG" id="ajs:Ajs_0304"/>
<dbReference type="eggNOG" id="COG0711">
    <property type="taxonomic scope" value="Bacteria"/>
</dbReference>
<dbReference type="HOGENOM" id="CLU_079215_4_5_4"/>
<dbReference type="Proteomes" id="UP000000645">
    <property type="component" value="Chromosome"/>
</dbReference>
<dbReference type="GO" id="GO:0005886">
    <property type="term" value="C:plasma membrane"/>
    <property type="evidence" value="ECO:0007669"/>
    <property type="project" value="UniProtKB-SubCell"/>
</dbReference>
<dbReference type="GO" id="GO:0045259">
    <property type="term" value="C:proton-transporting ATP synthase complex"/>
    <property type="evidence" value="ECO:0007669"/>
    <property type="project" value="UniProtKB-KW"/>
</dbReference>
<dbReference type="GO" id="GO:0046933">
    <property type="term" value="F:proton-transporting ATP synthase activity, rotational mechanism"/>
    <property type="evidence" value="ECO:0007669"/>
    <property type="project" value="UniProtKB-UniRule"/>
</dbReference>
<dbReference type="GO" id="GO:0046961">
    <property type="term" value="F:proton-transporting ATPase activity, rotational mechanism"/>
    <property type="evidence" value="ECO:0007669"/>
    <property type="project" value="TreeGrafter"/>
</dbReference>
<dbReference type="CDD" id="cd06503">
    <property type="entry name" value="ATP-synt_Fo_b"/>
    <property type="match status" value="1"/>
</dbReference>
<dbReference type="Gene3D" id="6.10.250.1580">
    <property type="match status" value="1"/>
</dbReference>
<dbReference type="HAMAP" id="MF_01398">
    <property type="entry name" value="ATP_synth_b_bprime"/>
    <property type="match status" value="1"/>
</dbReference>
<dbReference type="InterPro" id="IPR028987">
    <property type="entry name" value="ATP_synth_B-like_membr_sf"/>
</dbReference>
<dbReference type="InterPro" id="IPR002146">
    <property type="entry name" value="ATP_synth_b/b'su_bac/chlpt"/>
</dbReference>
<dbReference type="InterPro" id="IPR005864">
    <property type="entry name" value="ATP_synth_F0_bsu_bac"/>
</dbReference>
<dbReference type="InterPro" id="IPR050059">
    <property type="entry name" value="ATP_synthase_B_chain"/>
</dbReference>
<dbReference type="NCBIfam" id="TIGR01144">
    <property type="entry name" value="ATP_synt_b"/>
    <property type="match status" value="1"/>
</dbReference>
<dbReference type="NCBIfam" id="NF004411">
    <property type="entry name" value="PRK05759.1-2"/>
    <property type="match status" value="1"/>
</dbReference>
<dbReference type="PANTHER" id="PTHR33445:SF1">
    <property type="entry name" value="ATP SYNTHASE SUBUNIT B"/>
    <property type="match status" value="1"/>
</dbReference>
<dbReference type="PANTHER" id="PTHR33445">
    <property type="entry name" value="ATP SYNTHASE SUBUNIT B', CHLOROPLASTIC"/>
    <property type="match status" value="1"/>
</dbReference>
<dbReference type="Pfam" id="PF00430">
    <property type="entry name" value="ATP-synt_B"/>
    <property type="match status" value="1"/>
</dbReference>
<dbReference type="SUPFAM" id="SSF81573">
    <property type="entry name" value="F1F0 ATP synthase subunit B, membrane domain"/>
    <property type="match status" value="1"/>
</dbReference>
<protein>
    <recommendedName>
        <fullName evidence="1">ATP synthase subunit b</fullName>
    </recommendedName>
    <alternativeName>
        <fullName evidence="1">ATP synthase F(0) sector subunit b</fullName>
    </alternativeName>
    <alternativeName>
        <fullName evidence="1">ATPase subunit I</fullName>
    </alternativeName>
    <alternativeName>
        <fullName evidence="1">F-type ATPase subunit b</fullName>
        <shortName evidence="1">F-ATPase subunit b</shortName>
    </alternativeName>
</protein>
<name>ATPF_ACISJ</name>
<proteinExistence type="inferred from homology"/>
<reference key="1">
    <citation type="submission" date="2006-12" db="EMBL/GenBank/DDBJ databases">
        <title>Complete sequence of chromosome 1 of Acidovorax sp. JS42.</title>
        <authorList>
            <person name="Copeland A."/>
            <person name="Lucas S."/>
            <person name="Lapidus A."/>
            <person name="Barry K."/>
            <person name="Detter J.C."/>
            <person name="Glavina del Rio T."/>
            <person name="Dalin E."/>
            <person name="Tice H."/>
            <person name="Pitluck S."/>
            <person name="Chertkov O."/>
            <person name="Brettin T."/>
            <person name="Bruce D."/>
            <person name="Han C."/>
            <person name="Tapia R."/>
            <person name="Gilna P."/>
            <person name="Schmutz J."/>
            <person name="Larimer F."/>
            <person name="Land M."/>
            <person name="Hauser L."/>
            <person name="Kyrpides N."/>
            <person name="Kim E."/>
            <person name="Stahl D."/>
            <person name="Richardson P."/>
        </authorList>
    </citation>
    <scope>NUCLEOTIDE SEQUENCE [LARGE SCALE GENOMIC DNA]</scope>
    <source>
        <strain>JS42</strain>
    </source>
</reference>
<feature type="chain" id="PRO_0000368287" description="ATP synthase subunit b">
    <location>
        <begin position="1"/>
        <end position="156"/>
    </location>
</feature>
<feature type="transmembrane region" description="Helical" evidence="1">
    <location>
        <begin position="7"/>
        <end position="27"/>
    </location>
</feature>
<organism>
    <name type="scientific">Acidovorax sp. (strain JS42)</name>
    <dbReference type="NCBI Taxonomy" id="232721"/>
    <lineage>
        <taxon>Bacteria</taxon>
        <taxon>Pseudomonadati</taxon>
        <taxon>Pseudomonadota</taxon>
        <taxon>Betaproteobacteria</taxon>
        <taxon>Burkholderiales</taxon>
        <taxon>Comamonadaceae</taxon>
        <taxon>Acidovorax</taxon>
    </lineage>
</organism>
<evidence type="ECO:0000255" key="1">
    <source>
        <dbReference type="HAMAP-Rule" id="MF_01398"/>
    </source>
</evidence>
<comment type="function">
    <text evidence="1">F(1)F(0) ATP synthase produces ATP from ADP in the presence of a proton or sodium gradient. F-type ATPases consist of two structural domains, F(1) containing the extramembraneous catalytic core and F(0) containing the membrane proton channel, linked together by a central stalk and a peripheral stalk. During catalysis, ATP synthesis in the catalytic domain of F(1) is coupled via a rotary mechanism of the central stalk subunits to proton translocation.</text>
</comment>
<comment type="function">
    <text evidence="1">Component of the F(0) channel, it forms part of the peripheral stalk, linking F(1) to F(0).</text>
</comment>
<comment type="subunit">
    <text evidence="1">F-type ATPases have 2 components, F(1) - the catalytic core - and F(0) - the membrane proton channel. F(1) has five subunits: alpha(3), beta(3), gamma(1), delta(1), epsilon(1). F(0) has three main subunits: a(1), b(2) and c(10-14). The alpha and beta chains form an alternating ring which encloses part of the gamma chain. F(1) is attached to F(0) by a central stalk formed by the gamma and epsilon chains, while a peripheral stalk is formed by the delta and b chains.</text>
</comment>
<comment type="subcellular location">
    <subcellularLocation>
        <location evidence="1">Cell inner membrane</location>
        <topology evidence="1">Single-pass membrane protein</topology>
    </subcellularLocation>
</comment>
<comment type="similarity">
    <text evidence="1">Belongs to the ATPase B chain family.</text>
</comment>
<accession>A1W2T3</accession>